<dbReference type="EC" id="5.1.3.2"/>
<dbReference type="EMBL" id="U00089">
    <property type="protein sequence ID" value="AAB96224.1"/>
    <property type="molecule type" value="Genomic_DNA"/>
</dbReference>
<dbReference type="PIR" id="S73902">
    <property type="entry name" value="S73902"/>
</dbReference>
<dbReference type="RefSeq" id="NP_109945.1">
    <property type="nucleotide sequence ID" value="NC_000912.1"/>
</dbReference>
<dbReference type="RefSeq" id="WP_010874614.1">
    <property type="nucleotide sequence ID" value="NZ_OU342337.1"/>
</dbReference>
<dbReference type="SMR" id="P75517"/>
<dbReference type="IntAct" id="P75517">
    <property type="interactions" value="3"/>
</dbReference>
<dbReference type="STRING" id="272634.MPN_257"/>
<dbReference type="EnsemblBacteria" id="AAB96224">
    <property type="protein sequence ID" value="AAB96224"/>
    <property type="gene ID" value="MPN_257"/>
</dbReference>
<dbReference type="GeneID" id="66609097"/>
<dbReference type="KEGG" id="mpn:MPN_257"/>
<dbReference type="PATRIC" id="fig|272634.6.peg.276"/>
<dbReference type="HOGENOM" id="CLU_007383_1_10_14"/>
<dbReference type="OrthoDB" id="9811743at2"/>
<dbReference type="BioCyc" id="MPNE272634:G1GJ3-405-MONOMER"/>
<dbReference type="UniPathway" id="UPA00214"/>
<dbReference type="Proteomes" id="UP000000808">
    <property type="component" value="Chromosome"/>
</dbReference>
<dbReference type="GO" id="GO:0003978">
    <property type="term" value="F:UDP-glucose 4-epimerase activity"/>
    <property type="evidence" value="ECO:0007669"/>
    <property type="project" value="UniProtKB-EC"/>
</dbReference>
<dbReference type="GO" id="GO:0033499">
    <property type="term" value="P:galactose catabolic process via UDP-galactose, Leloir pathway"/>
    <property type="evidence" value="ECO:0007669"/>
    <property type="project" value="TreeGrafter"/>
</dbReference>
<dbReference type="CDD" id="cd05247">
    <property type="entry name" value="UDP_G4E_1_SDR_e"/>
    <property type="match status" value="1"/>
</dbReference>
<dbReference type="Gene3D" id="3.40.50.720">
    <property type="entry name" value="NAD(P)-binding Rossmann-like Domain"/>
    <property type="match status" value="1"/>
</dbReference>
<dbReference type="Gene3D" id="3.90.25.10">
    <property type="entry name" value="UDP-galactose 4-epimerase, domain 1"/>
    <property type="match status" value="1"/>
</dbReference>
<dbReference type="InterPro" id="IPR001509">
    <property type="entry name" value="Epimerase_deHydtase"/>
</dbReference>
<dbReference type="InterPro" id="IPR036291">
    <property type="entry name" value="NAD(P)-bd_dom_sf"/>
</dbReference>
<dbReference type="InterPro" id="IPR005886">
    <property type="entry name" value="UDP_G4E"/>
</dbReference>
<dbReference type="NCBIfam" id="TIGR01179">
    <property type="entry name" value="galE"/>
    <property type="match status" value="1"/>
</dbReference>
<dbReference type="PANTHER" id="PTHR43725:SF53">
    <property type="entry name" value="UDP-ARABINOSE 4-EPIMERASE 1"/>
    <property type="match status" value="1"/>
</dbReference>
<dbReference type="PANTHER" id="PTHR43725">
    <property type="entry name" value="UDP-GLUCOSE 4-EPIMERASE"/>
    <property type="match status" value="1"/>
</dbReference>
<dbReference type="Pfam" id="PF01370">
    <property type="entry name" value="Epimerase"/>
    <property type="match status" value="1"/>
</dbReference>
<dbReference type="SUPFAM" id="SSF51735">
    <property type="entry name" value="NAD(P)-binding Rossmann-fold domains"/>
    <property type="match status" value="1"/>
</dbReference>
<keyword id="KW-0119">Carbohydrate metabolism</keyword>
<keyword id="KW-0299">Galactose metabolism</keyword>
<keyword id="KW-0413">Isomerase</keyword>
<keyword id="KW-0520">NAD</keyword>
<keyword id="KW-1185">Reference proteome</keyword>
<comment type="function">
    <text evidence="1">Involved in the metabolism of galactose. Catalyzes the conversion of UDP-galactose (UDP-Gal) to UDP-glucose (UDP-Glc) through a mechanism involving the transient reduction of NAD (By similarity).</text>
</comment>
<comment type="catalytic activity">
    <reaction>
        <text>UDP-alpha-D-glucose = UDP-alpha-D-galactose</text>
        <dbReference type="Rhea" id="RHEA:22168"/>
        <dbReference type="ChEBI" id="CHEBI:58885"/>
        <dbReference type="ChEBI" id="CHEBI:66914"/>
        <dbReference type="EC" id="5.1.3.2"/>
    </reaction>
</comment>
<comment type="cofactor">
    <cofactor evidence="1">
        <name>NAD(+)</name>
        <dbReference type="ChEBI" id="CHEBI:57540"/>
    </cofactor>
</comment>
<comment type="pathway">
    <text>Carbohydrate metabolism; galactose metabolism.</text>
</comment>
<comment type="subunit">
    <text evidence="1">Homodimer.</text>
</comment>
<comment type="similarity">
    <text evidence="2">Belongs to the NAD(P)-dependent epimerase/dehydratase family.</text>
</comment>
<reference key="1">
    <citation type="journal article" date="1996" name="Nucleic Acids Res.">
        <title>Complete sequence analysis of the genome of the bacterium Mycoplasma pneumoniae.</title>
        <authorList>
            <person name="Himmelreich R."/>
            <person name="Hilbert H."/>
            <person name="Plagens H."/>
            <person name="Pirkl E."/>
            <person name="Li B.-C."/>
            <person name="Herrmann R."/>
        </authorList>
    </citation>
    <scope>NUCLEOTIDE SEQUENCE [LARGE SCALE GENOMIC DNA]</scope>
    <source>
        <strain>ATCC 29342 / M129 / Subtype 1</strain>
    </source>
</reference>
<evidence type="ECO:0000250" key="1"/>
<evidence type="ECO:0000305" key="2"/>
<organism>
    <name type="scientific">Mycoplasma pneumoniae (strain ATCC 29342 / M129 / Subtype 1)</name>
    <name type="common">Mycoplasmoides pneumoniae</name>
    <dbReference type="NCBI Taxonomy" id="272634"/>
    <lineage>
        <taxon>Bacteria</taxon>
        <taxon>Bacillati</taxon>
        <taxon>Mycoplasmatota</taxon>
        <taxon>Mycoplasmoidales</taxon>
        <taxon>Mycoplasmoidaceae</taxon>
        <taxon>Mycoplasmoides</taxon>
    </lineage>
</organism>
<sequence>MSETKSKVLVLGGLGYIGSCFIDQLLKQYPDVTVSVIDINHTSLALQLLPRQVNVHFVNLLDRAQLTDTIAQINPDVVFHFAAKTSVKESTEQPLTYFDHNLVGTLNLLHALKELQKPIQLFFSSTAAVFGSASTLPIPENLVLEETLASNPYGISKFLSEIVLQTLTRSPHFQVIALRYFNVAGASNPFGNFNKNTTLLIPNLIKAFMEKRTFFLYGDDYDTKDGSCIRDYIHVVDLCDAHLLAWKWLQANPKVRFESFNLGSGQGFSNWEVINTAQAIFAPEQLQLKIESRRAGDPPVLVVDCTKAKRLLNFQPTRSLHKMLSDETIFYRDFYNRL</sequence>
<gene>
    <name type="primary">galE</name>
    <name type="ordered locus">MPN_257</name>
    <name type="ORF">MP576</name>
</gene>
<protein>
    <recommendedName>
        <fullName>UDP-glucose 4-epimerase</fullName>
        <ecNumber>5.1.3.2</ecNumber>
    </recommendedName>
    <alternativeName>
        <fullName>Galactowaldenase</fullName>
    </alternativeName>
    <alternativeName>
        <fullName>UDP-galactose 4-epimerase</fullName>
    </alternativeName>
</protein>
<proteinExistence type="inferred from homology"/>
<name>GALE_MYCPN</name>
<feature type="chain" id="PRO_0000183210" description="UDP-glucose 4-epimerase">
    <location>
        <begin position="1"/>
        <end position="338"/>
    </location>
</feature>
<feature type="active site" description="Proton acceptor" evidence="1">
    <location>
        <position position="153"/>
    </location>
</feature>
<feature type="binding site" evidence="1">
    <location>
        <begin position="16"/>
        <end position="17"/>
    </location>
    <ligand>
        <name>NAD(+)</name>
        <dbReference type="ChEBI" id="CHEBI:57540"/>
    </ligand>
</feature>
<feature type="binding site" evidence="1">
    <location>
        <begin position="37"/>
        <end position="42"/>
    </location>
    <ligand>
        <name>NAD(+)</name>
        <dbReference type="ChEBI" id="CHEBI:57540"/>
    </ligand>
</feature>
<feature type="binding site" evidence="1">
    <location>
        <begin position="59"/>
        <end position="60"/>
    </location>
    <ligand>
        <name>NAD(+)</name>
        <dbReference type="ChEBI" id="CHEBI:57540"/>
    </ligand>
</feature>
<feature type="binding site" evidence="1">
    <location>
        <begin position="81"/>
        <end position="85"/>
    </location>
    <ligand>
        <name>NAD(+)</name>
        <dbReference type="ChEBI" id="CHEBI:57540"/>
    </ligand>
</feature>
<feature type="binding site" evidence="1">
    <location>
        <position position="126"/>
    </location>
    <ligand>
        <name>NAD(+)</name>
        <dbReference type="ChEBI" id="CHEBI:57540"/>
    </ligand>
</feature>
<feature type="binding site" evidence="1">
    <location>
        <position position="126"/>
    </location>
    <ligand>
        <name>substrate</name>
    </ligand>
</feature>
<feature type="binding site" evidence="1">
    <location>
        <position position="153"/>
    </location>
    <ligand>
        <name>NAD(+)</name>
        <dbReference type="ChEBI" id="CHEBI:57540"/>
    </ligand>
</feature>
<feature type="binding site" evidence="1">
    <location>
        <position position="153"/>
    </location>
    <ligand>
        <name>substrate</name>
    </ligand>
</feature>
<feature type="binding site" evidence="1">
    <location>
        <position position="157"/>
    </location>
    <ligand>
        <name>NAD(+)</name>
        <dbReference type="ChEBI" id="CHEBI:57540"/>
    </ligand>
</feature>
<feature type="binding site" evidence="1">
    <location>
        <position position="181"/>
    </location>
    <ligand>
        <name>NAD(+)</name>
        <dbReference type="ChEBI" id="CHEBI:57540"/>
    </ligand>
</feature>
<feature type="binding site" evidence="1">
    <location>
        <position position="182"/>
    </location>
    <ligand>
        <name>substrate</name>
    </ligand>
</feature>
<feature type="binding site" evidence="1">
    <location>
        <begin position="198"/>
        <end position="199"/>
    </location>
    <ligand>
        <name>substrate</name>
    </ligand>
</feature>
<feature type="binding site" evidence="1">
    <location>
        <begin position="215"/>
        <end position="217"/>
    </location>
    <ligand>
        <name>substrate</name>
    </ligand>
</feature>
<feature type="binding site" evidence="1">
    <location>
        <position position="230"/>
    </location>
    <ligand>
        <name>substrate</name>
    </ligand>
</feature>
<feature type="binding site" evidence="1">
    <location>
        <begin position="294"/>
        <end position="297"/>
    </location>
    <ligand>
        <name>substrate</name>
    </ligand>
</feature>
<accession>P75517</accession>